<proteinExistence type="predicted"/>
<protein>
    <recommendedName>
        <fullName>Putative uncharacterized protein DDB_G0287169</fullName>
    </recommendedName>
</protein>
<reference key="1">
    <citation type="journal article" date="2005" name="Nature">
        <title>The genome of the social amoeba Dictyostelium discoideum.</title>
        <authorList>
            <person name="Eichinger L."/>
            <person name="Pachebat J.A."/>
            <person name="Gloeckner G."/>
            <person name="Rajandream M.A."/>
            <person name="Sucgang R."/>
            <person name="Berriman M."/>
            <person name="Song J."/>
            <person name="Olsen R."/>
            <person name="Szafranski K."/>
            <person name="Xu Q."/>
            <person name="Tunggal B."/>
            <person name="Kummerfeld S."/>
            <person name="Madera M."/>
            <person name="Konfortov B.A."/>
            <person name="Rivero F."/>
            <person name="Bankier A.T."/>
            <person name="Lehmann R."/>
            <person name="Hamlin N."/>
            <person name="Davies R."/>
            <person name="Gaudet P."/>
            <person name="Fey P."/>
            <person name="Pilcher K."/>
            <person name="Chen G."/>
            <person name="Saunders D."/>
            <person name="Sodergren E.J."/>
            <person name="Davis P."/>
            <person name="Kerhornou A."/>
            <person name="Nie X."/>
            <person name="Hall N."/>
            <person name="Anjard C."/>
            <person name="Hemphill L."/>
            <person name="Bason N."/>
            <person name="Farbrother P."/>
            <person name="Desany B."/>
            <person name="Just E."/>
            <person name="Morio T."/>
            <person name="Rost R."/>
            <person name="Churcher C.M."/>
            <person name="Cooper J."/>
            <person name="Haydock S."/>
            <person name="van Driessche N."/>
            <person name="Cronin A."/>
            <person name="Goodhead I."/>
            <person name="Muzny D.M."/>
            <person name="Mourier T."/>
            <person name="Pain A."/>
            <person name="Lu M."/>
            <person name="Harper D."/>
            <person name="Lindsay R."/>
            <person name="Hauser H."/>
            <person name="James K.D."/>
            <person name="Quiles M."/>
            <person name="Madan Babu M."/>
            <person name="Saito T."/>
            <person name="Buchrieser C."/>
            <person name="Wardroper A."/>
            <person name="Felder M."/>
            <person name="Thangavelu M."/>
            <person name="Johnson D."/>
            <person name="Knights A."/>
            <person name="Loulseged H."/>
            <person name="Mungall K.L."/>
            <person name="Oliver K."/>
            <person name="Price C."/>
            <person name="Quail M.A."/>
            <person name="Urushihara H."/>
            <person name="Hernandez J."/>
            <person name="Rabbinowitsch E."/>
            <person name="Steffen D."/>
            <person name="Sanders M."/>
            <person name="Ma J."/>
            <person name="Kohara Y."/>
            <person name="Sharp S."/>
            <person name="Simmonds M.N."/>
            <person name="Spiegler S."/>
            <person name="Tivey A."/>
            <person name="Sugano S."/>
            <person name="White B."/>
            <person name="Walker D."/>
            <person name="Woodward J.R."/>
            <person name="Winckler T."/>
            <person name="Tanaka Y."/>
            <person name="Shaulsky G."/>
            <person name="Schleicher M."/>
            <person name="Weinstock G.M."/>
            <person name="Rosenthal A."/>
            <person name="Cox E.C."/>
            <person name="Chisholm R.L."/>
            <person name="Gibbs R.A."/>
            <person name="Loomis W.F."/>
            <person name="Platzer M."/>
            <person name="Kay R.R."/>
            <person name="Williams J.G."/>
            <person name="Dear P.H."/>
            <person name="Noegel A.A."/>
            <person name="Barrell B.G."/>
            <person name="Kuspa A."/>
        </authorList>
    </citation>
    <scope>NUCLEOTIDE SEQUENCE [LARGE SCALE GENOMIC DNA]</scope>
    <source>
        <strain>AX4</strain>
    </source>
</reference>
<keyword id="KW-1185">Reference proteome</keyword>
<accession>Q54KQ5</accession>
<sequence length="230" mass="26805">MDNNFRCIAFDLGGVLFSAGKEFAKAEWSSYGYDVVLIHDELVSEKAQQLRKGMISDNEFWNIYLKSKVPSNYDVDLIKQAYYRGYILDEDLSNWMKNTLKKPGNNYKLVAFSGNIPSRIQYLEDKYHFRSLFDAEAYSFDCGATKPDNYFIEYLIKICFPQETKDVVLKHGEPLIGQQLSLFQELGKQILYLDDSVKDSAPAKRYNINTFIYERGHINKLFEKYPNLNK</sequence>
<dbReference type="EMBL" id="AAFI02000098">
    <property type="protein sequence ID" value="EAL63859.1"/>
    <property type="molecule type" value="Genomic_DNA"/>
</dbReference>
<dbReference type="RefSeq" id="XP_637375.1">
    <property type="nucleotide sequence ID" value="XM_632283.1"/>
</dbReference>
<dbReference type="SMR" id="Q54KQ5"/>
<dbReference type="FunCoup" id="Q54KQ5">
    <property type="interactions" value="744"/>
</dbReference>
<dbReference type="PaxDb" id="44689-DDB0187319"/>
<dbReference type="EnsemblProtists" id="EAL63859">
    <property type="protein sequence ID" value="EAL63859"/>
    <property type="gene ID" value="DDB_G0287169"/>
</dbReference>
<dbReference type="GeneID" id="8625997"/>
<dbReference type="KEGG" id="ddi:DDB_G0287169"/>
<dbReference type="dictyBase" id="DDB_G0287169"/>
<dbReference type="VEuPathDB" id="AmoebaDB:DDB_G0287169"/>
<dbReference type="eggNOG" id="ENOG502RFTZ">
    <property type="taxonomic scope" value="Eukaryota"/>
</dbReference>
<dbReference type="HOGENOM" id="CLU_1206689_0_0_1"/>
<dbReference type="InParanoid" id="Q54KQ5"/>
<dbReference type="OMA" id="YERGHIN"/>
<dbReference type="PRO" id="PR:Q54KQ5"/>
<dbReference type="Proteomes" id="UP000002195">
    <property type="component" value="Chromosome 4"/>
</dbReference>
<dbReference type="Gene3D" id="3.40.50.1000">
    <property type="entry name" value="HAD superfamily/HAD-like"/>
    <property type="match status" value="1"/>
</dbReference>
<dbReference type="InterPro" id="IPR036412">
    <property type="entry name" value="HAD-like_sf"/>
</dbReference>
<dbReference type="InterPro" id="IPR023214">
    <property type="entry name" value="HAD_sf"/>
</dbReference>
<dbReference type="PANTHER" id="PTHR43611">
    <property type="entry name" value="ALPHA-D-GLUCOSE 1-PHOSPHATE PHOSPHATASE"/>
    <property type="match status" value="1"/>
</dbReference>
<dbReference type="PANTHER" id="PTHR43611:SF3">
    <property type="entry name" value="FLAVIN MONONUCLEOTIDE HYDROLASE 1, CHLOROPLATIC"/>
    <property type="match status" value="1"/>
</dbReference>
<dbReference type="SUPFAM" id="SSF56784">
    <property type="entry name" value="HAD-like"/>
    <property type="match status" value="1"/>
</dbReference>
<gene>
    <name type="ORF">DDB_G0287169</name>
</gene>
<organism>
    <name type="scientific">Dictyostelium discoideum</name>
    <name type="common">Social amoeba</name>
    <dbReference type="NCBI Taxonomy" id="44689"/>
    <lineage>
        <taxon>Eukaryota</taxon>
        <taxon>Amoebozoa</taxon>
        <taxon>Evosea</taxon>
        <taxon>Eumycetozoa</taxon>
        <taxon>Dictyostelia</taxon>
        <taxon>Dictyosteliales</taxon>
        <taxon>Dictyosteliaceae</taxon>
        <taxon>Dictyostelium</taxon>
    </lineage>
</organism>
<feature type="chain" id="PRO_0000367265" description="Putative uncharacterized protein DDB_G0287169">
    <location>
        <begin position="1"/>
        <end position="230"/>
    </location>
</feature>
<name>Y7169_DICDI</name>